<comment type="function">
    <text evidence="1">Acts as an inhibitor of mitochondrial fission. Interacts with MFF and prevents DNM1L recruitment to mitochondria, promoting a more fused mitochondrial network.</text>
</comment>
<comment type="subunit">
    <text evidence="1">Can homodimerize. Interacts with MFF; the interaction inhibits MFF interaction with DNM1L.</text>
</comment>
<comment type="subcellular location">
    <subcellularLocation>
        <location evidence="1">Cytoplasm</location>
        <location evidence="1">Cytosol</location>
    </subcellularLocation>
    <subcellularLocation>
        <location evidence="1">Mitochondrion outer membrane</location>
    </subcellularLocation>
    <text evidence="1">Predominantly localizes to the cytosol, with a minor fraction at the outer mitochondrial membrane.</text>
</comment>
<gene>
    <name evidence="1" type="primary">Mfi</name>
</gene>
<keyword id="KW-0963">Cytoplasm</keyword>
<keyword id="KW-0472">Membrane</keyword>
<keyword id="KW-0496">Mitochondrion</keyword>
<keyword id="KW-1000">Mitochondrion outer membrane</keyword>
<keyword id="KW-1185">Reference proteome</keyword>
<evidence type="ECO:0000250" key="1">
    <source>
        <dbReference type="UniProtKB" id="Q9D4W2"/>
    </source>
</evidence>
<evidence type="ECO:0000305" key="2"/>
<sequence length="305" mass="36199">MSMKRPQDHSKQEMAARIIQKAWKTFLNVSVFQHFKSLIDLRRQGEPRQIVKYINPKEAELLDAAAGVQVRFRLGGVKFPPEIYYKIFTHRHIEDLCANSPRDYTKLPARYASHNKDDPPQVEDNSGWYRRIENNGWRPVSNRFWMPTENEVLESTKESEFHFSKLKRKQDLEKKRKIKKIEWMRQMYYLGSLEAKVTDRETLVLIHKATKGLIKSIEDGGVDSVMEWEVDEVLNWTNTLNFDDYIASWRETATSNSSAYLKDAKLQRIQKSLQRKIYEDETKESEEKIYYDGDFYENVYIKPLL</sequence>
<feature type="chain" id="PRO_0000263667" description="Protein MFI">
    <location>
        <begin position="1"/>
        <end position="305"/>
    </location>
</feature>
<protein>
    <recommendedName>
        <fullName evidence="2">Protein MFI</fullName>
    </recommendedName>
    <alternativeName>
        <fullName evidence="1">Mitochondrial fission factor interactor</fullName>
    </alternativeName>
    <alternativeName>
        <fullName>Protein C11orf65 homolog</fullName>
    </alternativeName>
</protein>
<accession>Q569B9</accession>
<reference key="1">
    <citation type="journal article" date="2004" name="Genome Res.">
        <title>The status, quality, and expansion of the NIH full-length cDNA project: the Mammalian Gene Collection (MGC).</title>
        <authorList>
            <consortium name="The MGC Project Team"/>
        </authorList>
    </citation>
    <scope>NUCLEOTIDE SEQUENCE [LARGE SCALE MRNA]</scope>
    <source>
        <tissue>Liver</tissue>
    </source>
</reference>
<proteinExistence type="evidence at transcript level"/>
<dbReference type="EMBL" id="BC092578">
    <property type="protein sequence ID" value="AAH92578.1"/>
    <property type="molecule type" value="mRNA"/>
</dbReference>
<dbReference type="RefSeq" id="NP_001019436.1">
    <property type="nucleotide sequence ID" value="NM_001024265.1"/>
</dbReference>
<dbReference type="RefSeq" id="XP_006243140.1">
    <property type="nucleotide sequence ID" value="XM_006243078.3"/>
</dbReference>
<dbReference type="RefSeq" id="XP_006243141.1">
    <property type="nucleotide sequence ID" value="XM_006243079.3"/>
</dbReference>
<dbReference type="RefSeq" id="XP_006243142.1">
    <property type="nucleotide sequence ID" value="XM_006243080.3"/>
</dbReference>
<dbReference type="RefSeq" id="XP_008764485.1">
    <property type="nucleotide sequence ID" value="XM_008766263.2"/>
</dbReference>
<dbReference type="SMR" id="Q569B9"/>
<dbReference type="FunCoup" id="Q569B9">
    <property type="interactions" value="5"/>
</dbReference>
<dbReference type="PhosphoSitePlus" id="Q569B9"/>
<dbReference type="PaxDb" id="10116-ENSRNOP00000009562"/>
<dbReference type="GeneID" id="315665"/>
<dbReference type="KEGG" id="rno:315665"/>
<dbReference type="UCSC" id="RGD:1311251">
    <property type="organism name" value="rat"/>
</dbReference>
<dbReference type="AGR" id="RGD:1311251"/>
<dbReference type="CTD" id="315665"/>
<dbReference type="RGD" id="1311251">
    <property type="gene designation" value="C8h11orf65"/>
</dbReference>
<dbReference type="eggNOG" id="ENOG502QSTG">
    <property type="taxonomic scope" value="Eukaryota"/>
</dbReference>
<dbReference type="HOGENOM" id="CLU_068479_0_0_1"/>
<dbReference type="InParanoid" id="Q569B9"/>
<dbReference type="PhylomeDB" id="Q569B9"/>
<dbReference type="TreeFam" id="TF328500"/>
<dbReference type="PRO" id="PR:Q569B9"/>
<dbReference type="Proteomes" id="UP000002494">
    <property type="component" value="Unplaced"/>
</dbReference>
<dbReference type="GO" id="GO:0005829">
    <property type="term" value="C:cytosol"/>
    <property type="evidence" value="ECO:0000250"/>
    <property type="project" value="UniProtKB"/>
</dbReference>
<dbReference type="GO" id="GO:0005741">
    <property type="term" value="C:mitochondrial outer membrane"/>
    <property type="evidence" value="ECO:0000250"/>
    <property type="project" value="UniProtKB"/>
</dbReference>
<dbReference type="GO" id="GO:0090258">
    <property type="term" value="P:negative regulation of mitochondrial fission"/>
    <property type="evidence" value="ECO:0000250"/>
    <property type="project" value="UniProtKB"/>
</dbReference>
<dbReference type="GO" id="GO:1903215">
    <property type="term" value="P:negative regulation of protein targeting to mitochondrion"/>
    <property type="evidence" value="ECO:0000250"/>
    <property type="project" value="UniProtKB"/>
</dbReference>
<dbReference type="PANTHER" id="PTHR33504">
    <property type="entry name" value="NADH DEHYDROGENASE (UBIQUINONE) 1 BETA SUBCOMPLEX, 4"/>
    <property type="match status" value="1"/>
</dbReference>
<dbReference type="PANTHER" id="PTHR33504:SF2">
    <property type="entry name" value="PROTEIN MFI"/>
    <property type="match status" value="1"/>
</dbReference>
<name>MFI_RAT</name>
<organism>
    <name type="scientific">Rattus norvegicus</name>
    <name type="common">Rat</name>
    <dbReference type="NCBI Taxonomy" id="10116"/>
    <lineage>
        <taxon>Eukaryota</taxon>
        <taxon>Metazoa</taxon>
        <taxon>Chordata</taxon>
        <taxon>Craniata</taxon>
        <taxon>Vertebrata</taxon>
        <taxon>Euteleostomi</taxon>
        <taxon>Mammalia</taxon>
        <taxon>Eutheria</taxon>
        <taxon>Euarchontoglires</taxon>
        <taxon>Glires</taxon>
        <taxon>Rodentia</taxon>
        <taxon>Myomorpha</taxon>
        <taxon>Muroidea</taxon>
        <taxon>Muridae</taxon>
        <taxon>Murinae</taxon>
        <taxon>Rattus</taxon>
    </lineage>
</organism>